<proteinExistence type="predicted"/>
<protein>
    <recommendedName>
        <fullName>Uncharacterized ORF3 protein</fullName>
    </recommendedName>
</protein>
<reference key="1">
    <citation type="journal article" date="2000" name="Arch. Virol.">
        <title>Identification of a new human DNA virus (TTV-like mini virus, TLMV) intermediately related to TT virus and chicken anemia virus.</title>
        <authorList>
            <person name="Takahashi K."/>
            <person name="Iwasa Y."/>
            <person name="Hijikata M."/>
            <person name="Mishiro S."/>
        </authorList>
    </citation>
    <scope>NUCLEOTIDE SEQUENCE [GENOMIC DNA]</scope>
</reference>
<gene>
    <name type="ORF">ORF3</name>
</gene>
<organism>
    <name type="scientific">Torque teno mini virus 1 (isolate TLMV-CBD279)</name>
    <dbReference type="NCBI Taxonomy" id="766183"/>
    <lineage>
        <taxon>Viruses</taxon>
        <taxon>Viruses incertae sedis</taxon>
        <taxon>Anelloviridae</taxon>
        <taxon>Betatorquevirus</taxon>
        <taxon>Betatorquevirus homini1</taxon>
    </lineage>
</organism>
<evidence type="ECO:0000256" key="1">
    <source>
        <dbReference type="SAM" id="MobiDB-lite"/>
    </source>
</evidence>
<organismHost>
    <name type="scientific">Homo sapiens</name>
    <name type="common">Human</name>
    <dbReference type="NCBI Taxonomy" id="9606"/>
</organismHost>
<dbReference type="EMBL" id="AB026931">
    <property type="protein sequence ID" value="BAA86952.1"/>
    <property type="molecule type" value="Genomic_DNA"/>
</dbReference>
<dbReference type="RefSeq" id="YP_003587917.1">
    <property type="nucleotide sequence ID" value="NC_014097.1"/>
</dbReference>
<dbReference type="SMR" id="Q9QU29"/>
<dbReference type="KEGG" id="vg:9086759"/>
<dbReference type="Proteomes" id="UP000008779">
    <property type="component" value="Segment"/>
</dbReference>
<dbReference type="InterPro" id="IPR008474">
    <property type="entry name" value="DUF755"/>
</dbReference>
<dbReference type="Pfam" id="PF05501">
    <property type="entry name" value="DUF755"/>
    <property type="match status" value="1"/>
</dbReference>
<feature type="chain" id="PRO_0000404287" description="Uncharacterized ORF3 protein">
    <location>
        <begin position="1"/>
        <end position="130"/>
    </location>
</feature>
<feature type="region of interest" description="Disordered" evidence="1">
    <location>
        <begin position="1"/>
        <end position="47"/>
    </location>
</feature>
<feature type="region of interest" description="Disordered" evidence="1">
    <location>
        <begin position="78"/>
        <end position="130"/>
    </location>
</feature>
<feature type="compositionally biased region" description="Polar residues" evidence="1">
    <location>
        <begin position="13"/>
        <end position="33"/>
    </location>
</feature>
<feature type="compositionally biased region" description="Basic residues" evidence="1">
    <location>
        <begin position="86"/>
        <end position="110"/>
    </location>
</feature>
<feature type="compositionally biased region" description="Basic and acidic residues" evidence="1">
    <location>
        <begin position="117"/>
        <end position="130"/>
    </location>
</feature>
<keyword id="KW-1185">Reference proteome</keyword>
<sequence length="130" mass="15098">MTFYSSGEEAQHQWKQLQTQQNKKNSPRPVTSSRDFRSRVQGNQSNTIFTHLTKSAANSQCQLQKDLKKTLQLQHFLQTLEQKTSPSKHKRKRTKYRRTKKSKHHSRKKTTSSSSSSERDSTTGRESESS</sequence>
<name>ORF3_TTVB1</name>
<accession>Q9QU29</accession>